<evidence type="ECO:0000255" key="1">
    <source>
        <dbReference type="HAMAP-Rule" id="MF_00200"/>
    </source>
</evidence>
<keyword id="KW-0067">ATP-binding</keyword>
<keyword id="KW-0963">Cytoplasm</keyword>
<keyword id="KW-0436">Ligase</keyword>
<keyword id="KW-0547">Nucleotide-binding</keyword>
<sequence length="353" mass="37050">MARIIALDGAQGEGGGQILRSALSLSMITGQPFEMSGIRAGRAKPGLLRQHLTAVRAATEICGAQVNGDELGSQQLRFTPGPIRGGEYRFAIGSAGSCMLVLQTVLPALWFADGSSRVEVHGGTHNQAAPSADFICRVWEPLLARMGISQRTTLIKHGFYPAGGGAAATVVEPATSLRGLTLISRGETLRTTAEALLAAVPYHVGEREVATLEAHFPQAEKNVVALEAHFPQAEKNVVALEGGCGPGNALSLMIQSEQLTELFAAFGVKGTSAEAVANQVAHEARRYLASPAAVGEHLADQLILPLALAGEGAFTVARASAHLLTNIVVVERFLPVRFSCEATESGYLVRVSD</sequence>
<protein>
    <recommendedName>
        <fullName evidence="1">RNA 3'-terminal phosphate cyclase</fullName>
        <shortName evidence="1">RNA cyclase</shortName>
        <shortName evidence="1">RNA-3'-phosphate cyclase</shortName>
        <ecNumber evidence="1">6.5.1.4</ecNumber>
    </recommendedName>
</protein>
<comment type="function">
    <text evidence="1">Catalyzes the conversion of 3'-phosphate to a 2',3'-cyclic phosphodiester at the end of RNA. The mechanism of action of the enzyme occurs in 3 steps: (A) adenylation of the enzyme by ATP; (B) transfer of adenylate to an RNA-N3'P to produce RNA-N3'PP5'A; (C) and attack of the adjacent 2'-hydroxyl on the 3'-phosphorus in the diester linkage to produce the cyclic end product. The biological role of this enzyme is unknown but it is likely to function in some aspects of cellular RNA processing.</text>
</comment>
<comment type="catalytic activity">
    <reaction evidence="1">
        <text>a 3'-end 3'-phospho-ribonucleotide-RNA + ATP = a 3'-end 2',3'-cyclophospho-ribonucleotide-RNA + AMP + diphosphate</text>
        <dbReference type="Rhea" id="RHEA:23976"/>
        <dbReference type="Rhea" id="RHEA-COMP:10463"/>
        <dbReference type="Rhea" id="RHEA-COMP:10464"/>
        <dbReference type="ChEBI" id="CHEBI:30616"/>
        <dbReference type="ChEBI" id="CHEBI:33019"/>
        <dbReference type="ChEBI" id="CHEBI:83062"/>
        <dbReference type="ChEBI" id="CHEBI:83064"/>
        <dbReference type="ChEBI" id="CHEBI:456215"/>
        <dbReference type="EC" id="6.5.1.4"/>
    </reaction>
</comment>
<comment type="subcellular location">
    <subcellularLocation>
        <location evidence="1">Cytoplasm</location>
    </subcellularLocation>
</comment>
<comment type="similarity">
    <text evidence="1">Belongs to the RNA 3'-terminal cyclase family. Type 1 subfamily.</text>
</comment>
<reference key="1">
    <citation type="journal article" date="2011" name="J. Bacteriol.">
        <title>Comparative genomics of 28 Salmonella enterica isolates: evidence for CRISPR-mediated adaptive sublineage evolution.</title>
        <authorList>
            <person name="Fricke W.F."/>
            <person name="Mammel M.K."/>
            <person name="McDermott P.F."/>
            <person name="Tartera C."/>
            <person name="White D.G."/>
            <person name="Leclerc J.E."/>
            <person name="Ravel J."/>
            <person name="Cebula T.A."/>
        </authorList>
    </citation>
    <scope>NUCLEOTIDE SEQUENCE [LARGE SCALE GENOMIC DNA]</scope>
    <source>
        <strain>SL476</strain>
    </source>
</reference>
<gene>
    <name evidence="1" type="primary">rtcA</name>
    <name type="ordered locus">SeHA_C3826</name>
</gene>
<proteinExistence type="inferred from homology"/>
<dbReference type="EC" id="6.5.1.4" evidence="1"/>
<dbReference type="EMBL" id="CP001120">
    <property type="protein sequence ID" value="ACF69933.1"/>
    <property type="molecule type" value="Genomic_DNA"/>
</dbReference>
<dbReference type="RefSeq" id="WP_000101032.1">
    <property type="nucleotide sequence ID" value="NC_011083.1"/>
</dbReference>
<dbReference type="SMR" id="B4TKU5"/>
<dbReference type="KEGG" id="seh:SeHA_C3826"/>
<dbReference type="HOGENOM" id="CLU_027882_0_0_6"/>
<dbReference type="Proteomes" id="UP000001866">
    <property type="component" value="Chromosome"/>
</dbReference>
<dbReference type="GO" id="GO:0005737">
    <property type="term" value="C:cytoplasm"/>
    <property type="evidence" value="ECO:0007669"/>
    <property type="project" value="UniProtKB-SubCell"/>
</dbReference>
<dbReference type="GO" id="GO:0005524">
    <property type="term" value="F:ATP binding"/>
    <property type="evidence" value="ECO:0007669"/>
    <property type="project" value="UniProtKB-KW"/>
</dbReference>
<dbReference type="GO" id="GO:0003963">
    <property type="term" value="F:RNA-3'-phosphate cyclase activity"/>
    <property type="evidence" value="ECO:0007669"/>
    <property type="project" value="UniProtKB-UniRule"/>
</dbReference>
<dbReference type="GO" id="GO:0006396">
    <property type="term" value="P:RNA processing"/>
    <property type="evidence" value="ECO:0007669"/>
    <property type="project" value="InterPro"/>
</dbReference>
<dbReference type="CDD" id="cd00874">
    <property type="entry name" value="RNA_Cyclase_Class_II"/>
    <property type="match status" value="1"/>
</dbReference>
<dbReference type="FunFam" id="3.65.10.20:FF:000002">
    <property type="entry name" value="GM19193"/>
    <property type="match status" value="1"/>
</dbReference>
<dbReference type="Gene3D" id="3.65.10.20">
    <property type="entry name" value="RNA 3'-terminal phosphate cyclase domain"/>
    <property type="match status" value="1"/>
</dbReference>
<dbReference type="Gene3D" id="3.30.360.20">
    <property type="entry name" value="RNA 3'-terminal phosphate cyclase, insert domain"/>
    <property type="match status" value="1"/>
</dbReference>
<dbReference type="HAMAP" id="MF_00200">
    <property type="entry name" value="RTC"/>
    <property type="match status" value="1"/>
</dbReference>
<dbReference type="InterPro" id="IPR013791">
    <property type="entry name" value="RNA3'-term_phos_cycl_insert"/>
</dbReference>
<dbReference type="InterPro" id="IPR023797">
    <property type="entry name" value="RNA3'_phos_cyclase_dom"/>
</dbReference>
<dbReference type="InterPro" id="IPR037136">
    <property type="entry name" value="RNA3'_phos_cyclase_dom_sf"/>
</dbReference>
<dbReference type="InterPro" id="IPR000228">
    <property type="entry name" value="RNA3'_term_phos_cyc"/>
</dbReference>
<dbReference type="InterPro" id="IPR017770">
    <property type="entry name" value="RNA3'_term_phos_cyc_type_1"/>
</dbReference>
<dbReference type="InterPro" id="IPR013792">
    <property type="entry name" value="RNA3'P_cycl/enolpyr_Trfase_a/b"/>
</dbReference>
<dbReference type="InterPro" id="IPR036553">
    <property type="entry name" value="RPTC_insert"/>
</dbReference>
<dbReference type="NCBIfam" id="NF003246">
    <property type="entry name" value="PRK04204.1-2"/>
    <property type="match status" value="1"/>
</dbReference>
<dbReference type="NCBIfam" id="NF003247">
    <property type="entry name" value="PRK04204.1-3"/>
    <property type="match status" value="1"/>
</dbReference>
<dbReference type="NCBIfam" id="TIGR03399">
    <property type="entry name" value="RNA_3prim_cycl"/>
    <property type="match status" value="1"/>
</dbReference>
<dbReference type="PANTHER" id="PTHR11096">
    <property type="entry name" value="RNA 3' TERMINAL PHOSPHATE CYCLASE"/>
    <property type="match status" value="1"/>
</dbReference>
<dbReference type="PANTHER" id="PTHR11096:SF0">
    <property type="entry name" value="RNA 3'-TERMINAL PHOSPHATE CYCLASE"/>
    <property type="match status" value="1"/>
</dbReference>
<dbReference type="Pfam" id="PF01137">
    <property type="entry name" value="RTC"/>
    <property type="match status" value="1"/>
</dbReference>
<dbReference type="Pfam" id="PF05189">
    <property type="entry name" value="RTC_insert"/>
    <property type="match status" value="1"/>
</dbReference>
<dbReference type="PIRSF" id="PIRSF005378">
    <property type="entry name" value="RNA3'_term_phos_cycl_euk"/>
    <property type="match status" value="1"/>
</dbReference>
<dbReference type="SUPFAM" id="SSF55205">
    <property type="entry name" value="EPT/RTPC-like"/>
    <property type="match status" value="2"/>
</dbReference>
<dbReference type="SUPFAM" id="SSF52913">
    <property type="entry name" value="RNA 3'-terminal phosphate cyclase, RPTC, insert domain"/>
    <property type="match status" value="1"/>
</dbReference>
<accession>B4TKU5</accession>
<name>RTCA_SALHS</name>
<organism>
    <name type="scientific">Salmonella heidelberg (strain SL476)</name>
    <dbReference type="NCBI Taxonomy" id="454169"/>
    <lineage>
        <taxon>Bacteria</taxon>
        <taxon>Pseudomonadati</taxon>
        <taxon>Pseudomonadota</taxon>
        <taxon>Gammaproteobacteria</taxon>
        <taxon>Enterobacterales</taxon>
        <taxon>Enterobacteriaceae</taxon>
        <taxon>Salmonella</taxon>
    </lineage>
</organism>
<feature type="chain" id="PRO_1000099354" description="RNA 3'-terminal phosphate cyclase">
    <location>
        <begin position="1"/>
        <end position="353"/>
    </location>
</feature>
<feature type="active site" description="Tele-AMP-histidine intermediate" evidence="1">
    <location>
        <position position="322"/>
    </location>
</feature>
<feature type="binding site" evidence="1">
    <location>
        <position position="103"/>
    </location>
    <ligand>
        <name>ATP</name>
        <dbReference type="ChEBI" id="CHEBI:30616"/>
    </ligand>
</feature>
<feature type="binding site" evidence="1">
    <location>
        <begin position="297"/>
        <end position="301"/>
    </location>
    <ligand>
        <name>ATP</name>
        <dbReference type="ChEBI" id="CHEBI:30616"/>
    </ligand>
</feature>